<keyword id="KW-0009">Actin-binding</keyword>
<keyword id="KW-0025">Alternative splicing</keyword>
<keyword id="KW-0067">ATP-binding</keyword>
<keyword id="KW-0112">Calmodulin-binding</keyword>
<keyword id="KW-0175">Coiled coil</keyword>
<keyword id="KW-0963">Cytoplasm</keyword>
<keyword id="KW-0505">Motor protein</keyword>
<keyword id="KW-0518">Myosin</keyword>
<keyword id="KW-0547">Nucleotide-binding</keyword>
<keyword id="KW-0597">Phosphoprotein</keyword>
<keyword id="KW-0653">Protein transport</keyword>
<keyword id="KW-1185">Reference proteome</keyword>
<keyword id="KW-0677">Repeat</keyword>
<keyword id="KW-0813">Transport</keyword>
<dbReference type="EMBL" id="BC011494">
    <property type="protein sequence ID" value="AAH11494.1"/>
    <property type="molecule type" value="mRNA"/>
</dbReference>
<dbReference type="EMBL" id="BC046444">
    <property type="protein sequence ID" value="AAH46444.1"/>
    <property type="molecule type" value="mRNA"/>
</dbReference>
<dbReference type="EMBL" id="BC118525">
    <property type="protein sequence ID" value="AAI18526.1"/>
    <property type="molecule type" value="mRNA"/>
</dbReference>
<dbReference type="EMBL" id="AK173102">
    <property type="protein sequence ID" value="BAD32380.1"/>
    <property type="molecule type" value="Transcribed_RNA"/>
</dbReference>
<dbReference type="EMBL" id="M55253">
    <property type="protein sequence ID" value="AAA37655.1"/>
    <property type="status" value="ALT_SEQ"/>
    <property type="molecule type" value="mRNA"/>
</dbReference>
<dbReference type="CCDS" id="CCDS37858.1">
    <molecule id="P21271-1"/>
</dbReference>
<dbReference type="PIR" id="A36481">
    <property type="entry name" value="A36481"/>
</dbReference>
<dbReference type="SMR" id="P21271"/>
<dbReference type="FunCoup" id="P21271">
    <property type="interactions" value="223"/>
</dbReference>
<dbReference type="IntAct" id="P21271">
    <property type="interactions" value="1"/>
</dbReference>
<dbReference type="MINT" id="P21271"/>
<dbReference type="STRING" id="10090.ENSMUSP00000073790"/>
<dbReference type="iPTMnet" id="P21271"/>
<dbReference type="PhosphoSitePlus" id="P21271"/>
<dbReference type="jPOST" id="P21271"/>
<dbReference type="PaxDb" id="10090-ENSMUSP00000073790"/>
<dbReference type="ProteomicsDB" id="287588">
    <molecule id="P21271-1"/>
</dbReference>
<dbReference type="ProteomicsDB" id="287589">
    <molecule id="P21271-3"/>
</dbReference>
<dbReference type="AGR" id="MGI:106598"/>
<dbReference type="MGI" id="MGI:106598">
    <property type="gene designation" value="Myo5b"/>
</dbReference>
<dbReference type="eggNOG" id="KOG0160">
    <property type="taxonomic scope" value="Eukaryota"/>
</dbReference>
<dbReference type="InParanoid" id="P21271"/>
<dbReference type="OrthoDB" id="6108017at2759"/>
<dbReference type="PhylomeDB" id="P21271"/>
<dbReference type="Reactome" id="R-MMU-432040">
    <property type="pathway name" value="Vasopressin regulates renal water homeostasis via Aquaporins"/>
</dbReference>
<dbReference type="ChiTaRS" id="Myo5b">
    <property type="organism name" value="mouse"/>
</dbReference>
<dbReference type="PRO" id="PR:P21271"/>
<dbReference type="Proteomes" id="UP000000589">
    <property type="component" value="Unplaced"/>
</dbReference>
<dbReference type="RNAct" id="P21271">
    <property type="molecule type" value="protein"/>
</dbReference>
<dbReference type="GO" id="GO:0045179">
    <property type="term" value="C:apical cortex"/>
    <property type="evidence" value="ECO:0000250"/>
    <property type="project" value="UniProtKB"/>
</dbReference>
<dbReference type="GO" id="GO:0005903">
    <property type="term" value="C:brush border"/>
    <property type="evidence" value="ECO:0000314"/>
    <property type="project" value="UniProtKB"/>
</dbReference>
<dbReference type="GO" id="GO:0016459">
    <property type="term" value="C:myosin complex"/>
    <property type="evidence" value="ECO:0007669"/>
    <property type="project" value="UniProtKB-KW"/>
</dbReference>
<dbReference type="GO" id="GO:0098685">
    <property type="term" value="C:Schaffer collateral - CA1 synapse"/>
    <property type="evidence" value="ECO:0000314"/>
    <property type="project" value="SynGO"/>
</dbReference>
<dbReference type="GO" id="GO:0003779">
    <property type="term" value="F:actin binding"/>
    <property type="evidence" value="ECO:0007669"/>
    <property type="project" value="UniProtKB-KW"/>
</dbReference>
<dbReference type="GO" id="GO:0005524">
    <property type="term" value="F:ATP binding"/>
    <property type="evidence" value="ECO:0007669"/>
    <property type="project" value="UniProtKB-KW"/>
</dbReference>
<dbReference type="GO" id="GO:0005516">
    <property type="term" value="F:calmodulin binding"/>
    <property type="evidence" value="ECO:0007669"/>
    <property type="project" value="UniProtKB-KW"/>
</dbReference>
<dbReference type="GO" id="GO:0003774">
    <property type="term" value="F:cytoskeletal motor activity"/>
    <property type="evidence" value="ECO:0007669"/>
    <property type="project" value="InterPro"/>
</dbReference>
<dbReference type="GO" id="GO:0016197">
    <property type="term" value="P:endosomal transport"/>
    <property type="evidence" value="ECO:0000250"/>
    <property type="project" value="UniProtKB"/>
</dbReference>
<dbReference type="GO" id="GO:0050804">
    <property type="term" value="P:modulation of chemical synaptic transmission"/>
    <property type="evidence" value="ECO:0000314"/>
    <property type="project" value="SynGO"/>
</dbReference>
<dbReference type="GO" id="GO:0071806">
    <property type="term" value="P:protein transmembrane transport"/>
    <property type="evidence" value="ECO:0000314"/>
    <property type="project" value="MGI"/>
</dbReference>
<dbReference type="CDD" id="cd15477">
    <property type="entry name" value="Myo5b_CBD"/>
    <property type="match status" value="1"/>
</dbReference>
<dbReference type="CDD" id="cd01380">
    <property type="entry name" value="MYSc_Myo5"/>
    <property type="match status" value="1"/>
</dbReference>
<dbReference type="FunFam" id="1.20.58.530:FF:000002">
    <property type="entry name" value="Class V myosin"/>
    <property type="match status" value="1"/>
</dbReference>
<dbReference type="FunFam" id="1.10.10.820:FF:000001">
    <property type="entry name" value="Myosin heavy chain"/>
    <property type="match status" value="1"/>
</dbReference>
<dbReference type="FunFam" id="1.20.5.190:FF:000006">
    <property type="entry name" value="Myosin VA"/>
    <property type="match status" value="1"/>
</dbReference>
<dbReference type="FunFam" id="1.20.120.720:FF:000016">
    <property type="entry name" value="Myosin VB"/>
    <property type="match status" value="1"/>
</dbReference>
<dbReference type="FunFam" id="1.20.5.190:FF:000037">
    <property type="entry name" value="Myosin VB"/>
    <property type="match status" value="1"/>
</dbReference>
<dbReference type="FunFam" id="1.20.5.190:FF:000001">
    <property type="entry name" value="unconventional myosin-Va"/>
    <property type="match status" value="1"/>
</dbReference>
<dbReference type="Gene3D" id="1.10.10.820">
    <property type="match status" value="1"/>
</dbReference>
<dbReference type="Gene3D" id="1.20.5.190">
    <property type="match status" value="3"/>
</dbReference>
<dbReference type="Gene3D" id="1.20.58.530">
    <property type="match status" value="1"/>
</dbReference>
<dbReference type="Gene3D" id="6.20.240.20">
    <property type="match status" value="1"/>
</dbReference>
<dbReference type="Gene3D" id="3.40.850.10">
    <property type="entry name" value="Kinesin motor domain"/>
    <property type="match status" value="1"/>
</dbReference>
<dbReference type="Gene3D" id="1.20.120.720">
    <property type="entry name" value="Myosin VI head, motor domain, U50 subdomain"/>
    <property type="match status" value="1"/>
</dbReference>
<dbReference type="InterPro" id="IPR002710">
    <property type="entry name" value="Dilute_dom"/>
</dbReference>
<dbReference type="InterPro" id="IPR000048">
    <property type="entry name" value="IQ_motif_EF-hand-BS"/>
</dbReference>
<dbReference type="InterPro" id="IPR036961">
    <property type="entry name" value="Kinesin_motor_dom_sf"/>
</dbReference>
<dbReference type="InterPro" id="IPR037990">
    <property type="entry name" value="Myo5b_CBD"/>
</dbReference>
<dbReference type="InterPro" id="IPR001609">
    <property type="entry name" value="Myosin_head_motor_dom-like"/>
</dbReference>
<dbReference type="InterPro" id="IPR004009">
    <property type="entry name" value="Myosin_N"/>
</dbReference>
<dbReference type="InterPro" id="IPR036103">
    <property type="entry name" value="MYSc_Myo5"/>
</dbReference>
<dbReference type="InterPro" id="IPR027417">
    <property type="entry name" value="P-loop_NTPase"/>
</dbReference>
<dbReference type="PANTHER" id="PTHR13140">
    <property type="entry name" value="MYOSIN"/>
    <property type="match status" value="1"/>
</dbReference>
<dbReference type="PANTHER" id="PTHR13140:SF356">
    <property type="entry name" value="UNCONVENTIONAL MYOSIN-VB"/>
    <property type="match status" value="1"/>
</dbReference>
<dbReference type="Pfam" id="PF01843">
    <property type="entry name" value="DIL"/>
    <property type="match status" value="1"/>
</dbReference>
<dbReference type="Pfam" id="PF00612">
    <property type="entry name" value="IQ"/>
    <property type="match status" value="6"/>
</dbReference>
<dbReference type="Pfam" id="PF00063">
    <property type="entry name" value="Myosin_head"/>
    <property type="match status" value="1"/>
</dbReference>
<dbReference type="PRINTS" id="PR00193">
    <property type="entry name" value="MYOSINHEAVY"/>
</dbReference>
<dbReference type="SMART" id="SM01132">
    <property type="entry name" value="DIL"/>
    <property type="match status" value="1"/>
</dbReference>
<dbReference type="SMART" id="SM00015">
    <property type="entry name" value="IQ"/>
    <property type="match status" value="6"/>
</dbReference>
<dbReference type="SMART" id="SM00242">
    <property type="entry name" value="MYSc"/>
    <property type="match status" value="1"/>
</dbReference>
<dbReference type="SUPFAM" id="SSF52540">
    <property type="entry name" value="P-loop containing nucleoside triphosphate hydrolases"/>
    <property type="match status" value="2"/>
</dbReference>
<dbReference type="PROSITE" id="PS51126">
    <property type="entry name" value="DILUTE"/>
    <property type="match status" value="1"/>
</dbReference>
<dbReference type="PROSITE" id="PS50096">
    <property type="entry name" value="IQ"/>
    <property type="match status" value="6"/>
</dbReference>
<dbReference type="PROSITE" id="PS51456">
    <property type="entry name" value="MYOSIN_MOTOR"/>
    <property type="match status" value="1"/>
</dbReference>
<dbReference type="PROSITE" id="PS51844">
    <property type="entry name" value="SH3_LIKE"/>
    <property type="match status" value="1"/>
</dbReference>
<gene>
    <name type="primary">Myo5b</name>
    <name type="synonym">Kiaa1119</name>
</gene>
<comment type="function">
    <text evidence="3">May be involved in vesicular trafficking via its association with the CART complex. The CART complex is necessary for efficient transferrin receptor recycling but not for EGFR degradation. Required in a complex with RAB11A and RAB11FIP2 for the transport of NPC1L1 to the plasma membrane. Together with RAB11A participates in CFTR trafficking to the plasma membrane and TF (transferrin) recycling in nonpolarized cells. Together with RAB11A and RAB8A participates in epithelial cell polarization. Together with RAB25 regulates transcytosis. Required for proper localization of bile salt export pump ABCB11 at the apical/canalicular plasma membrane of hepatocytes.</text>
</comment>
<comment type="subunit">
    <text evidence="1 10">Component of the CART complex, at least composed of ACTN4, HGS/HRS, MYO5B and TRIM3. Interacts with RAB11FIP2 (By similarity). Interacts with RAB11A and RAB8A (By similarity). Found in a complex with CFTR and RAB11A (By similarity). Interacts with NPC1L1 (By similarity). Interacts with LIMA1 (PubMed:29880681).</text>
</comment>
<comment type="subcellular location">
    <subcellularLocation>
        <location evidence="2">Cytoplasm</location>
    </subcellularLocation>
</comment>
<comment type="alternative products">
    <event type="alternative splicing"/>
    <isoform>
        <id>P21271-1</id>
        <name>1</name>
        <sequence type="displayed"/>
    </isoform>
    <isoform>
        <id>P21271-3</id>
        <name>3</name>
        <sequence type="described" ref="VSP_022099"/>
    </isoform>
</comment>
<comment type="similarity">
    <text evidence="12">Belongs to the TRAFAC class myosin-kinesin ATPase superfamily. Myosin family.</text>
</comment>
<comment type="caution">
    <text evidence="13">Was originally thought to be a glutamate decarboxylase (GAD).</text>
</comment>
<comment type="sequence caution" evidence="12">
    <conflict type="miscellaneous discrepancy">
        <sequence resource="EMBL-CDS" id="AAA37655"/>
    </conflict>
    <text>Contaminating sequence. Sequence of unknown origin in the N-terminal part.</text>
</comment>
<organism>
    <name type="scientific">Mus musculus</name>
    <name type="common">Mouse</name>
    <dbReference type="NCBI Taxonomy" id="10090"/>
    <lineage>
        <taxon>Eukaryota</taxon>
        <taxon>Metazoa</taxon>
        <taxon>Chordata</taxon>
        <taxon>Craniata</taxon>
        <taxon>Vertebrata</taxon>
        <taxon>Euteleostomi</taxon>
        <taxon>Mammalia</taxon>
        <taxon>Eutheria</taxon>
        <taxon>Euarchontoglires</taxon>
        <taxon>Glires</taxon>
        <taxon>Rodentia</taxon>
        <taxon>Myomorpha</taxon>
        <taxon>Muroidea</taxon>
        <taxon>Muridae</taxon>
        <taxon>Murinae</taxon>
        <taxon>Mus</taxon>
        <taxon>Mus</taxon>
    </lineage>
</organism>
<sequence length="1818" mass="210570">MSYSELYTRYTRVWIPDPDEVWRSAELTKDYKEGDKSLQLRLEDDTILEYPVDVQNNQVPFLRNPDILVGENDLTALSHLHEPAVLHNLKVRFLESNHIYTYCGIVLVAINPYEQLPIYGQDVIYAYSGQNMGDMDPHIFAVAEEAYKQMARDEKNQSIIVSGESGAGKTVSAKYAMRYFATVGGSASDTNIEEKVLASSPIMEAIGNAKTTRNDNSSRFGKFIEIGFDKKYHIIGANMRTYLLEKSRVVFQADDERNYHIFYQLCAAASLPEFKELALTCAEDFFYTAHGGNTTIEGVNDADDFEKTRQALTLLGVRDSHQISIFKIIASILHLGSVEIQSERDGDSCSISPQDEHLSNFCSLLGIEHSQMEHWLCHRKLVTTSETYVKTMSLQQVVNARDALAKHIYAQLFSWIVEHINKALHTSHKQHSFIGVLDIYGFETFEINSFEQFCINYANEKLQQQFNSHVFKLEQEEYMKEQIPWTLIDFYDNQPCIDLIEAKLGILDLLDEECKVPKGTDQNWAQKLYERHSNSQHFQKPRMSNTAFIVNHFADKVEYLSDGFLEKNRDTVYEEQINILKASKFPLVADLFHDDKDSAPATNTAKNRSSSKINVRSSRPLIKVPNKEHKKSVGYQFRTSLNLLMETLNATTPHYVRCIKPNDEKLPFHFDPKRAVQQLRACGVLETIRISAAGYPSRWTYHDFFNRYRVLMKKRELTNTDKKNICKSVLESLIKDPDKFQFGRTKIFFRAGQVAYLEKLRADKFREATIMIQKSVRGWLQRVKYRRLRAATLSLQRFCRGYLARRLAEHLRRTRAAIVFQKQYRMLKARRAYRRVCRATVIIQSFTRAMFVRRNYRQVLMEHKATIIQKYARGWMARKRFLRERDAAIVIQCAFRRLKARQELKALKIEARSAEHLKRLNVGMENKVVQLQRKIDDQNKEFKTLSEQLSAVTSSHAVEVEKLKKELAHYQQNQEADTSLQLQEEVQSLRTELQKAHSERRVLEDAHNKENGELRKRVADLEHENALLKDEKEYLNNQILCQSKAESSQSSVEENLLMKKELEEERSRYQNLVKEYSQLEQRYENLRDEQTPGHRKNPSNQSSLESDSNYPSISTSEIGDTEDALQQVEEIGIEKAAMDMTVFLKLQKRVRELEQERKKLQAQLEKGQQDSKKGQVEQQNNGLDVDQDADIAYNSLKRQELESENKKLKNDLNELRKAVADQAMQDNSTHSSPDSYSLLLNQLKLANEELEVRKEEVLILRTQIMNADQRRLSGKNMEPNINARTSWPNSEKHVDQEDAIEAYHGVCQTNRLLEAQLQAQSLEHEEEVEHLKAQVEALKEEMDKQQQTFCQTLLLSPEAQVEFGVQQEISRLTNENLDFKELVEKLEKNERKLKKQLKIYMKKVQDLEAAQALAQSDRRHHELTRQVTVQRKEKDFQGMLEYHKEDEALLIRNLVTDLKPQMLSGTVPCLPAYILYMCIRHADYTNDDLKVHSLLSSTINGIKKVLKKHNDDFEMTSFWLSNTCRFLHCLKQYSGDEGFMTQNTAKQNEHCLKNFDLTEYRQVLSDLSIQIYQQLIKIAEGLLQPMIVSAMLENESIQGLSGVRPTGYRKRSSSMVDGENSYCLEAIVRQMNSFHTVLCDQGLDPEIILQVFKQLFYMINAVTLNNLLLRKDACSWSTGMQLRYNISQLEEWLRGKNLHQSGAVQTMEPLIQAAQLLQLKKKTHEDAEAICSLCTSLSTQQIVKILNLYTPLNEFEERVTVSFIRTIQAQLQERNDPQQLLLDSKHVFPVLFPYNPSALTMDSIHIPACLNLEFLNEV</sequence>
<feature type="chain" id="PRO_0000123461" description="Unconventional myosin-Vb">
    <location>
        <begin position="1"/>
        <end position="1818"/>
    </location>
</feature>
<feature type="domain" description="Myosin N-terminal SH3-like" evidence="8">
    <location>
        <begin position="8"/>
        <end position="60"/>
    </location>
</feature>
<feature type="domain" description="Myosin motor" evidence="7">
    <location>
        <begin position="69"/>
        <end position="762"/>
    </location>
</feature>
<feature type="domain" description="IQ 1" evidence="5">
    <location>
        <begin position="765"/>
        <end position="794"/>
    </location>
</feature>
<feature type="domain" description="IQ 2" evidence="5">
    <location>
        <begin position="788"/>
        <end position="817"/>
    </location>
</feature>
<feature type="domain" description="IQ 3" evidence="5">
    <location>
        <begin position="813"/>
        <end position="842"/>
    </location>
</feature>
<feature type="domain" description="IQ 4" evidence="5">
    <location>
        <begin position="836"/>
        <end position="865"/>
    </location>
</feature>
<feature type="domain" description="IQ 5" evidence="5">
    <location>
        <begin position="861"/>
        <end position="890"/>
    </location>
</feature>
<feature type="domain" description="IQ 6" evidence="5">
    <location>
        <begin position="884"/>
        <end position="913"/>
    </location>
</feature>
<feature type="domain" description="Dilute" evidence="6">
    <location>
        <begin position="1496"/>
        <end position="1773"/>
    </location>
</feature>
<feature type="region of interest" description="Requires for interaction with LIMA1" evidence="3">
    <location>
        <begin position="21"/>
        <end position="40"/>
    </location>
</feature>
<feature type="region of interest" description="Actin-binding" evidence="4">
    <location>
        <begin position="641"/>
        <end position="663"/>
    </location>
</feature>
<feature type="region of interest" description="Disordered" evidence="9">
    <location>
        <begin position="1086"/>
        <end position="1120"/>
    </location>
</feature>
<feature type="region of interest" description="Disordered" evidence="9">
    <location>
        <begin position="1161"/>
        <end position="1188"/>
    </location>
</feature>
<feature type="coiled-coil region" evidence="4">
    <location>
        <begin position="1140"/>
        <end position="1261"/>
    </location>
</feature>
<feature type="coiled-coil region" evidence="4">
    <location>
        <begin position="1313"/>
        <end position="1415"/>
    </location>
</feature>
<feature type="compositionally biased region" description="Polar residues" evidence="9">
    <location>
        <begin position="1098"/>
        <end position="1118"/>
    </location>
</feature>
<feature type="binding site" evidence="4">
    <location>
        <begin position="163"/>
        <end position="170"/>
    </location>
    <ligand>
        <name>ATP</name>
        <dbReference type="ChEBI" id="CHEBI:30616"/>
    </ligand>
</feature>
<feature type="modified residue" description="Phosphoserine" evidence="3">
    <location>
        <position position="1416"/>
    </location>
</feature>
<feature type="splice variant" id="VSP_022099" description="In isoform 3." evidence="11">
    <original>N</original>
    <variation>NSQTEDWGYLNEDGELGLAYQGLKQVA</variation>
    <location>
        <position position="1310"/>
    </location>
</feature>
<feature type="sequence conflict" description="In Ref. 1; AAH46444." evidence="12" ref="1">
    <original>A</original>
    <variation>V</variation>
    <location>
        <position position="829"/>
    </location>
</feature>
<feature type="sequence conflict" description="In Ref. 1; AAH46444." evidence="12" ref="1">
    <original>T</original>
    <variation>A</variation>
    <location>
        <position position="840"/>
    </location>
</feature>
<feature type="sequence conflict" description="In Ref. 1; AAH46444." evidence="12" ref="1">
    <original>KR</original>
    <variation>RC</variation>
    <location>
        <begin position="879"/>
        <end position="880"/>
    </location>
</feature>
<feature type="sequence conflict" description="In Ref. 1; AAH46444." evidence="12" ref="1">
    <original>E</original>
    <variation>Q</variation>
    <location>
        <position position="884"/>
    </location>
</feature>
<feature type="sequence conflict" description="In Ref. 3; AAA37655." evidence="12" ref="3">
    <original>KA</original>
    <variation>NG</variation>
    <location>
        <begin position="1217"/>
        <end position="1218"/>
    </location>
</feature>
<feature type="sequence conflict" description="In Ref. 3; AAA37655." evidence="12" ref="3">
    <original>V</original>
    <variation>A</variation>
    <location>
        <position position="1257"/>
    </location>
</feature>
<feature type="sequence conflict" description="In Ref. 3; AAA37655." evidence="12" ref="3">
    <original>D</original>
    <variation>V</variation>
    <location>
        <position position="1446"/>
    </location>
</feature>
<feature type="sequence conflict" description="In Ref. 3; AAA37655." evidence="12" ref="3">
    <original>S</original>
    <variation>L</variation>
    <location>
        <position position="1464"/>
    </location>
</feature>
<feature type="sequence conflict" description="In Ref. 3; AAA37655." evidence="12" ref="3">
    <original>T</original>
    <variation>I</variation>
    <location>
        <position position="1544"/>
    </location>
</feature>
<feature type="sequence conflict" description="In Ref. 3; AAA37655." evidence="12" ref="3">
    <original>IA</original>
    <variation>MP</variation>
    <location>
        <begin position="1578"/>
        <end position="1579"/>
    </location>
</feature>
<feature type="sequence conflict" description="In Ref. 3; AAA37655." evidence="12" ref="3">
    <location>
        <begin position="1620"/>
        <end position="1631"/>
    </location>
</feature>
<proteinExistence type="evidence at protein level"/>
<name>MYO5B_MOUSE</name>
<evidence type="ECO:0000250" key="1"/>
<evidence type="ECO:0000250" key="2">
    <source>
        <dbReference type="UniProtKB" id="P70569"/>
    </source>
</evidence>
<evidence type="ECO:0000250" key="3">
    <source>
        <dbReference type="UniProtKB" id="Q9ULV0"/>
    </source>
</evidence>
<evidence type="ECO:0000255" key="4"/>
<evidence type="ECO:0000255" key="5">
    <source>
        <dbReference type="PROSITE-ProRule" id="PRU00116"/>
    </source>
</evidence>
<evidence type="ECO:0000255" key="6">
    <source>
        <dbReference type="PROSITE-ProRule" id="PRU00503"/>
    </source>
</evidence>
<evidence type="ECO:0000255" key="7">
    <source>
        <dbReference type="PROSITE-ProRule" id="PRU00782"/>
    </source>
</evidence>
<evidence type="ECO:0000255" key="8">
    <source>
        <dbReference type="PROSITE-ProRule" id="PRU01190"/>
    </source>
</evidence>
<evidence type="ECO:0000256" key="9">
    <source>
        <dbReference type="SAM" id="MobiDB-lite"/>
    </source>
</evidence>
<evidence type="ECO:0000269" key="10">
    <source>
    </source>
</evidence>
<evidence type="ECO:0000303" key="11">
    <source>
    </source>
</evidence>
<evidence type="ECO:0000305" key="12"/>
<evidence type="ECO:0000305" key="13">
    <source>
    </source>
</evidence>
<reference key="1">
    <citation type="journal article" date="2004" name="Genome Res.">
        <title>The status, quality, and expansion of the NIH full-length cDNA project: the Mammalian Gene Collection (MGC).</title>
        <authorList>
            <consortium name="The MGC Project Team"/>
        </authorList>
    </citation>
    <scope>NUCLEOTIDE SEQUENCE [LARGE SCALE MRNA] (ISOFORM 1)</scope>
    <source>
        <strain>FVB/N</strain>
        <tissue>Colon</tissue>
        <tissue>Mammary tumor</tissue>
    </source>
</reference>
<reference key="2">
    <citation type="journal article" date="2004" name="DNA Res.">
        <title>Prediction of the coding sequences of mouse homologues of KIAA gene: IV. The complete nucleotide sequences of 500 mouse KIAA-homologous cDNAs identified by screening of terminal sequences of cDNA clones randomly sampled from size-fractionated libraries.</title>
        <authorList>
            <person name="Okazaki N."/>
            <person name="Kikuno R."/>
            <person name="Ohara R."/>
            <person name="Inamoto S."/>
            <person name="Koseki H."/>
            <person name="Hiraoka S."/>
            <person name="Saga Y."/>
            <person name="Seino S."/>
            <person name="Nishimura M."/>
            <person name="Kaisho T."/>
            <person name="Hoshino K."/>
            <person name="Kitamura H."/>
            <person name="Nagase T."/>
            <person name="Ohara O."/>
            <person name="Koga H."/>
        </authorList>
    </citation>
    <scope>NUCLEOTIDE SEQUENCE [LARGE SCALE MRNA] OF 1054-1818 (ISOFORM 3)</scope>
    <source>
        <tissue>Brain</tissue>
    </source>
</reference>
<reference key="3">
    <citation type="journal article" date="1990" name="Proc. Natl. Acad. Sci. U.S.A.">
        <title>Molecular cloning and amino acid sequence of brain L-glutamate decarboxylase.</title>
        <authorList>
            <person name="Huang W.-M."/>
            <person name="Reed-Fourquet L."/>
            <person name="Wu E."/>
            <person name="Wu J.-Y."/>
        </authorList>
    </citation>
    <scope>NUCLEOTIDE SEQUENCE [MRNA] OF 1086-1818 (ISOFORM 1)</scope>
    <source>
        <tissue>Brain</tissue>
    </source>
</reference>
<reference key="4">
    <citation type="journal article" date="2010" name="Cell">
        <title>A tissue-specific atlas of mouse protein phosphorylation and expression.</title>
        <authorList>
            <person name="Huttlin E.L."/>
            <person name="Jedrychowski M.P."/>
            <person name="Elias J.E."/>
            <person name="Goswami T."/>
            <person name="Rad R."/>
            <person name="Beausoleil S.A."/>
            <person name="Villen J."/>
            <person name="Haas W."/>
            <person name="Sowa M.E."/>
            <person name="Gygi S.P."/>
        </authorList>
    </citation>
    <scope>IDENTIFICATION BY MASS SPECTROMETRY [LARGE SCALE ANALYSIS]</scope>
    <source>
        <tissue>Kidney</tissue>
        <tissue>Lung</tissue>
        <tissue>Pancreas</tissue>
        <tissue>Testis</tissue>
    </source>
</reference>
<reference key="5">
    <citation type="journal article" date="2018" name="Science">
        <title>A LIMA1 variant promotes low plasma LDL cholesterol and decreases intestinal cholesterol absorption.</title>
        <authorList>
            <person name="Zhang Y.Y."/>
            <person name="Fu Z.Y."/>
            <person name="Wei J."/>
            <person name="Qi W."/>
            <person name="Baituola G."/>
            <person name="Luo J."/>
            <person name="Meng Y.J."/>
            <person name="Guo S.Y."/>
            <person name="Yin H."/>
            <person name="Jiang S.Y."/>
            <person name="Li Y.F."/>
            <person name="Miao H.H."/>
            <person name="Liu Y."/>
            <person name="Wang Y."/>
            <person name="Li B.L."/>
            <person name="Ma Y.T."/>
            <person name="Song B.L."/>
        </authorList>
    </citation>
    <scope>INTERACTION WITH LIMA1</scope>
</reference>
<accession>P21271</accession>
<accession>Q148A3</accession>
<accession>Q69ZR6</accession>
<accession>Q811F6</accession>
<accession>Q91X59</accession>
<protein>
    <recommendedName>
        <fullName>Unconventional myosin-Vb</fullName>
    </recommendedName>
</protein>